<gene>
    <name type="primary">Pdpk1</name>
    <name type="synonym">Pdk1</name>
</gene>
<dbReference type="EC" id="2.7.11.1" evidence="6 9 12"/>
<dbReference type="EMBL" id="AF086625">
    <property type="protein sequence ID" value="AAC67544.1"/>
    <property type="molecule type" value="mRNA"/>
</dbReference>
<dbReference type="EMBL" id="AF126294">
    <property type="protein sequence ID" value="AAD38505.1"/>
    <property type="molecule type" value="mRNA"/>
</dbReference>
<dbReference type="EMBL" id="AF079535">
    <property type="protein sequence ID" value="AAC96115.1"/>
    <property type="molecule type" value="mRNA"/>
</dbReference>
<dbReference type="EMBL" id="BC146001">
    <property type="protein sequence ID" value="AAI46002.1"/>
    <property type="molecule type" value="mRNA"/>
</dbReference>
<dbReference type="EMBL" id="BC146003">
    <property type="protein sequence ID" value="AAI46004.1"/>
    <property type="molecule type" value="mRNA"/>
</dbReference>
<dbReference type="CCDS" id="CCDS28474.1"/>
<dbReference type="RefSeq" id="NP_035192.2">
    <property type="nucleotide sequence ID" value="NM_011062.4"/>
</dbReference>
<dbReference type="SMR" id="Q9Z2A0"/>
<dbReference type="BioGRID" id="202099">
    <property type="interactions" value="11"/>
</dbReference>
<dbReference type="FunCoup" id="Q9Z2A0">
    <property type="interactions" value="3614"/>
</dbReference>
<dbReference type="IntAct" id="Q9Z2A0">
    <property type="interactions" value="18"/>
</dbReference>
<dbReference type="STRING" id="10090.ENSMUSP00000099991"/>
<dbReference type="GlyGen" id="Q9Z2A0">
    <property type="glycosylation" value="1 site, 1 O-linked glycan (1 site)"/>
</dbReference>
<dbReference type="iPTMnet" id="Q9Z2A0"/>
<dbReference type="PhosphoSitePlus" id="Q9Z2A0"/>
<dbReference type="jPOST" id="Q9Z2A0"/>
<dbReference type="PaxDb" id="10090-ENSMUSP00000099991"/>
<dbReference type="ProteomicsDB" id="294051"/>
<dbReference type="Pumba" id="Q9Z2A0"/>
<dbReference type="Antibodypedia" id="3794">
    <property type="antibodies" value="955 antibodies from 47 providers"/>
</dbReference>
<dbReference type="DNASU" id="18607"/>
<dbReference type="Ensembl" id="ENSMUST00000102927.10">
    <property type="protein sequence ID" value="ENSMUSP00000099991.4"/>
    <property type="gene ID" value="ENSMUSG00000024122.17"/>
</dbReference>
<dbReference type="GeneID" id="18607"/>
<dbReference type="KEGG" id="mmu:18607"/>
<dbReference type="UCSC" id="uc008auk.3">
    <property type="organism name" value="mouse"/>
</dbReference>
<dbReference type="AGR" id="MGI:1338068"/>
<dbReference type="CTD" id="5170"/>
<dbReference type="MGI" id="MGI:1338068">
    <property type="gene designation" value="Pdpk1"/>
</dbReference>
<dbReference type="VEuPathDB" id="HostDB:ENSMUSG00000024122"/>
<dbReference type="eggNOG" id="KOG0592">
    <property type="taxonomic scope" value="Eukaryota"/>
</dbReference>
<dbReference type="GeneTree" id="ENSGT00940000155267"/>
<dbReference type="InParanoid" id="Q9Z2A0"/>
<dbReference type="OMA" id="QYRVPDN"/>
<dbReference type="OrthoDB" id="347657at2759"/>
<dbReference type="PhylomeDB" id="Q9Z2A0"/>
<dbReference type="TreeFam" id="TF105423"/>
<dbReference type="BRENDA" id="2.7.11.1">
    <property type="organism ID" value="3474"/>
</dbReference>
<dbReference type="Reactome" id="R-MMU-114604">
    <property type="pathway name" value="GPVI-mediated activation cascade"/>
</dbReference>
<dbReference type="Reactome" id="R-MMU-1257604">
    <property type="pathway name" value="PIP3 activates AKT signaling"/>
</dbReference>
<dbReference type="Reactome" id="R-MMU-165158">
    <property type="pathway name" value="Activation of AKT2"/>
</dbReference>
<dbReference type="Reactome" id="R-MMU-202424">
    <property type="pathway name" value="Downstream TCR signaling"/>
</dbReference>
<dbReference type="Reactome" id="R-MMU-2730905">
    <property type="pathway name" value="Role of LAT2/NTAL/LAB on calcium mobilization"/>
</dbReference>
<dbReference type="Reactome" id="R-MMU-2871837">
    <property type="pathway name" value="FCERI mediated NF-kB activation"/>
</dbReference>
<dbReference type="Reactome" id="R-MMU-354192">
    <property type="pathway name" value="Integrin signaling"/>
</dbReference>
<dbReference type="Reactome" id="R-MMU-389357">
    <property type="pathway name" value="CD28 dependent PI3K/Akt signaling"/>
</dbReference>
<dbReference type="Reactome" id="R-MMU-392451">
    <property type="pathway name" value="G beta:gamma signalling through PI3Kgamma"/>
</dbReference>
<dbReference type="Reactome" id="R-MMU-5218920">
    <property type="pathway name" value="VEGFR2 mediated vascular permeability"/>
</dbReference>
<dbReference type="Reactome" id="R-MMU-5218921">
    <property type="pathway name" value="VEGFR2 mediated cell proliferation"/>
</dbReference>
<dbReference type="Reactome" id="R-MMU-5607764">
    <property type="pathway name" value="CLEC7A (Dectin-1) signaling"/>
</dbReference>
<dbReference type="Reactome" id="R-MMU-5625740">
    <property type="pathway name" value="RHO GTPases activate PKNs"/>
</dbReference>
<dbReference type="Reactome" id="R-MMU-6804757">
    <property type="pathway name" value="Regulation of TP53 Degradation"/>
</dbReference>
<dbReference type="Reactome" id="R-MMU-9634635">
    <property type="pathway name" value="Estrogen-stimulated signaling through PRKCZ"/>
</dbReference>
<dbReference type="Reactome" id="R-MMU-9856530">
    <property type="pathway name" value="High laminar flow shear stress activates signaling by PIEZO1 and PECAM1:CDH5:KDR in endothelial cells"/>
</dbReference>
<dbReference type="BioGRID-ORCS" id="18607">
    <property type="hits" value="11 hits in 83 CRISPR screens"/>
</dbReference>
<dbReference type="CD-CODE" id="CE726F99">
    <property type="entry name" value="Postsynaptic density"/>
</dbReference>
<dbReference type="ChiTaRS" id="Pdpk1">
    <property type="organism name" value="mouse"/>
</dbReference>
<dbReference type="PRO" id="PR:Q9Z2A0"/>
<dbReference type="Proteomes" id="UP000000589">
    <property type="component" value="Chromosome 17"/>
</dbReference>
<dbReference type="RNAct" id="Q9Z2A0">
    <property type="molecule type" value="protein"/>
</dbReference>
<dbReference type="Bgee" id="ENSMUSG00000024122">
    <property type="expression patterns" value="Expressed in rostral migratory stream and 271 other cell types or tissues"/>
</dbReference>
<dbReference type="ExpressionAtlas" id="Q9Z2A0">
    <property type="expression patterns" value="baseline and differential"/>
</dbReference>
<dbReference type="GO" id="GO:0042995">
    <property type="term" value="C:cell projection"/>
    <property type="evidence" value="ECO:0007669"/>
    <property type="project" value="Ensembl"/>
</dbReference>
<dbReference type="GO" id="GO:0005737">
    <property type="term" value="C:cytoplasm"/>
    <property type="evidence" value="ECO:0000314"/>
    <property type="project" value="MGI"/>
</dbReference>
<dbReference type="GO" id="GO:0031410">
    <property type="term" value="C:cytoplasmic vesicle"/>
    <property type="evidence" value="ECO:0000314"/>
    <property type="project" value="MGI"/>
</dbReference>
<dbReference type="GO" id="GO:0005829">
    <property type="term" value="C:cytosol"/>
    <property type="evidence" value="ECO:0007669"/>
    <property type="project" value="Ensembl"/>
</dbReference>
<dbReference type="GO" id="GO:0005925">
    <property type="term" value="C:focal adhesion"/>
    <property type="evidence" value="ECO:0007669"/>
    <property type="project" value="UniProtKB-SubCell"/>
</dbReference>
<dbReference type="GO" id="GO:0005634">
    <property type="term" value="C:nucleus"/>
    <property type="evidence" value="ECO:0007669"/>
    <property type="project" value="UniProtKB-SubCell"/>
</dbReference>
<dbReference type="GO" id="GO:0005886">
    <property type="term" value="C:plasma membrane"/>
    <property type="evidence" value="ECO:0007669"/>
    <property type="project" value="UniProtKB-SubCell"/>
</dbReference>
<dbReference type="GO" id="GO:0014069">
    <property type="term" value="C:postsynaptic density"/>
    <property type="evidence" value="ECO:0000314"/>
    <property type="project" value="MGI"/>
</dbReference>
<dbReference type="GO" id="GO:0004676">
    <property type="term" value="F:3-phosphoinositide-dependent protein kinase activity"/>
    <property type="evidence" value="ECO:0000314"/>
    <property type="project" value="UniProtKB"/>
</dbReference>
<dbReference type="GO" id="GO:0005524">
    <property type="term" value="F:ATP binding"/>
    <property type="evidence" value="ECO:0007669"/>
    <property type="project" value="UniProtKB-KW"/>
</dbReference>
<dbReference type="GO" id="GO:0016004">
    <property type="term" value="F:phospholipase activator activity"/>
    <property type="evidence" value="ECO:0007669"/>
    <property type="project" value="Ensembl"/>
</dbReference>
<dbReference type="GO" id="GO:0043274">
    <property type="term" value="F:phospholipase binding"/>
    <property type="evidence" value="ECO:0007669"/>
    <property type="project" value="Ensembl"/>
</dbReference>
<dbReference type="GO" id="GO:0106310">
    <property type="term" value="F:protein serine kinase activity"/>
    <property type="evidence" value="ECO:0007669"/>
    <property type="project" value="RHEA"/>
</dbReference>
<dbReference type="GO" id="GO:0019722">
    <property type="term" value="P:calcium-mediated signaling"/>
    <property type="evidence" value="ECO:0007669"/>
    <property type="project" value="Ensembl"/>
</dbReference>
<dbReference type="GO" id="GO:0016477">
    <property type="term" value="P:cell migration"/>
    <property type="evidence" value="ECO:0007669"/>
    <property type="project" value="Ensembl"/>
</dbReference>
<dbReference type="GO" id="GO:0071364">
    <property type="term" value="P:cellular response to epidermal growth factor stimulus"/>
    <property type="evidence" value="ECO:0007669"/>
    <property type="project" value="Ensembl"/>
</dbReference>
<dbReference type="GO" id="GO:0007173">
    <property type="term" value="P:epidermal growth factor receptor signaling pathway"/>
    <property type="evidence" value="ECO:0007669"/>
    <property type="project" value="Ensembl"/>
</dbReference>
<dbReference type="GO" id="GO:0097191">
    <property type="term" value="P:extrinsic apoptotic signaling pathway"/>
    <property type="evidence" value="ECO:0007669"/>
    <property type="project" value="Ensembl"/>
</dbReference>
<dbReference type="GO" id="GO:0006972">
    <property type="term" value="P:hyperosmotic response"/>
    <property type="evidence" value="ECO:0000314"/>
    <property type="project" value="MGI"/>
</dbReference>
<dbReference type="GO" id="GO:0008286">
    <property type="term" value="P:insulin receptor signaling pathway"/>
    <property type="evidence" value="ECO:0000314"/>
    <property type="project" value="MGI"/>
</dbReference>
<dbReference type="GO" id="GO:0048009">
    <property type="term" value="P:insulin-like growth factor receptor signaling pathway"/>
    <property type="evidence" value="ECO:0000314"/>
    <property type="project" value="MGI"/>
</dbReference>
<dbReference type="GO" id="GO:0010667">
    <property type="term" value="P:negative regulation of cardiac muscle cell apoptotic process"/>
    <property type="evidence" value="ECO:0000315"/>
    <property type="project" value="UniProtKB"/>
</dbReference>
<dbReference type="GO" id="GO:2000352">
    <property type="term" value="P:negative regulation of endothelial cell apoptotic process"/>
    <property type="evidence" value="ECO:0007669"/>
    <property type="project" value="Ensembl"/>
</dbReference>
<dbReference type="GO" id="GO:0034122">
    <property type="term" value="P:negative regulation of toll-like receptor signaling pathway"/>
    <property type="evidence" value="ECO:0000315"/>
    <property type="project" value="UniProtKB"/>
</dbReference>
<dbReference type="GO" id="GO:0030512">
    <property type="term" value="P:negative regulation of transforming growth factor beta receptor signaling pathway"/>
    <property type="evidence" value="ECO:0007669"/>
    <property type="project" value="Ensembl"/>
</dbReference>
<dbReference type="GO" id="GO:0043491">
    <property type="term" value="P:phosphatidylinositol 3-kinase/protein kinase B signal transduction"/>
    <property type="evidence" value="ECO:0007669"/>
    <property type="project" value="Ensembl"/>
</dbReference>
<dbReference type="GO" id="GO:0043536">
    <property type="term" value="P:positive regulation of blood vessel endothelial cell migration"/>
    <property type="evidence" value="ECO:0007669"/>
    <property type="project" value="Ensembl"/>
</dbReference>
<dbReference type="GO" id="GO:0051897">
    <property type="term" value="P:positive regulation of phosphatidylinositol 3-kinase/protein kinase B signal transduction"/>
    <property type="evidence" value="ECO:0007669"/>
    <property type="project" value="Ensembl"/>
</dbReference>
<dbReference type="GO" id="GO:1903078">
    <property type="term" value="P:positive regulation of protein localization to plasma membrane"/>
    <property type="evidence" value="ECO:0007669"/>
    <property type="project" value="Ensembl"/>
</dbReference>
<dbReference type="GO" id="GO:0051281">
    <property type="term" value="P:positive regulation of release of sequestered calcium ion into cytosol"/>
    <property type="evidence" value="ECO:0007669"/>
    <property type="project" value="Ensembl"/>
</dbReference>
<dbReference type="GO" id="GO:1903672">
    <property type="term" value="P:positive regulation of sprouting angiogenesis"/>
    <property type="evidence" value="ECO:0007669"/>
    <property type="project" value="Ensembl"/>
</dbReference>
<dbReference type="GO" id="GO:1905564">
    <property type="term" value="P:positive regulation of vascular endothelial cell proliferation"/>
    <property type="evidence" value="ECO:0007669"/>
    <property type="project" value="Ensembl"/>
</dbReference>
<dbReference type="GO" id="GO:0043122">
    <property type="term" value="P:regulation of canonical NF-kappaB signal transduction"/>
    <property type="evidence" value="ECO:0007669"/>
    <property type="project" value="Ensembl"/>
</dbReference>
<dbReference type="GO" id="GO:0010594">
    <property type="term" value="P:regulation of endothelial cell migration"/>
    <property type="evidence" value="ECO:0000315"/>
    <property type="project" value="UniProtKB"/>
</dbReference>
<dbReference type="GO" id="GO:0043304">
    <property type="term" value="P:regulation of mast cell degranulation"/>
    <property type="evidence" value="ECO:0000315"/>
    <property type="project" value="UniProtKB"/>
</dbReference>
<dbReference type="GO" id="GO:0007165">
    <property type="term" value="P:signal transduction"/>
    <property type="evidence" value="ECO:0000304"/>
    <property type="project" value="MGI"/>
</dbReference>
<dbReference type="GO" id="GO:0003323">
    <property type="term" value="P:type B pancreatic cell development"/>
    <property type="evidence" value="ECO:0000315"/>
    <property type="project" value="UniProtKB"/>
</dbReference>
<dbReference type="CDD" id="cd01262">
    <property type="entry name" value="PH_PDK1"/>
    <property type="match status" value="1"/>
</dbReference>
<dbReference type="CDD" id="cd05581">
    <property type="entry name" value="STKc_PDK1"/>
    <property type="match status" value="1"/>
</dbReference>
<dbReference type="FunFam" id="2.30.29.30:FF:000126">
    <property type="entry name" value="3-phosphoinositide dependent protein kinase 1"/>
    <property type="match status" value="1"/>
</dbReference>
<dbReference type="FunFam" id="1.10.510.10:FF:000163">
    <property type="entry name" value="3-phosphoinositide-dependent protein kinase 1"/>
    <property type="match status" value="1"/>
</dbReference>
<dbReference type="FunFam" id="3.30.200.20:FF:000257">
    <property type="entry name" value="3-phosphoinositide-dependent protein kinase 1"/>
    <property type="match status" value="1"/>
</dbReference>
<dbReference type="Gene3D" id="3.30.200.20">
    <property type="entry name" value="Phosphorylase Kinase, domain 1"/>
    <property type="match status" value="1"/>
</dbReference>
<dbReference type="Gene3D" id="2.30.29.30">
    <property type="entry name" value="Pleckstrin-homology domain (PH domain)/Phosphotyrosine-binding domain (PTB)"/>
    <property type="match status" value="1"/>
</dbReference>
<dbReference type="Gene3D" id="1.10.510.10">
    <property type="entry name" value="Transferase(Phosphotransferase) domain 1"/>
    <property type="match status" value="1"/>
</dbReference>
<dbReference type="InterPro" id="IPR011009">
    <property type="entry name" value="Kinase-like_dom_sf"/>
</dbReference>
<dbReference type="InterPro" id="IPR033931">
    <property type="entry name" value="PDK1-typ_PH"/>
</dbReference>
<dbReference type="InterPro" id="IPR039046">
    <property type="entry name" value="PDPK1"/>
</dbReference>
<dbReference type="InterPro" id="IPR011993">
    <property type="entry name" value="PH-like_dom_sf"/>
</dbReference>
<dbReference type="InterPro" id="IPR000719">
    <property type="entry name" value="Prot_kinase_dom"/>
</dbReference>
<dbReference type="InterPro" id="IPR017441">
    <property type="entry name" value="Protein_kinase_ATP_BS"/>
</dbReference>
<dbReference type="InterPro" id="IPR008271">
    <property type="entry name" value="Ser/Thr_kinase_AS"/>
</dbReference>
<dbReference type="InterPro" id="IPR050236">
    <property type="entry name" value="Ser_Thr_kinase_AGC"/>
</dbReference>
<dbReference type="PANTHER" id="PTHR24356:SF163">
    <property type="entry name" value="3-PHOSPHOINOSITIDE-DEPENDENT PROTEIN KINASE 1-RELATED"/>
    <property type="match status" value="1"/>
</dbReference>
<dbReference type="PANTHER" id="PTHR24356">
    <property type="entry name" value="SERINE/THREONINE-PROTEIN KINASE"/>
    <property type="match status" value="1"/>
</dbReference>
<dbReference type="Pfam" id="PF14593">
    <property type="entry name" value="PH_3"/>
    <property type="match status" value="1"/>
</dbReference>
<dbReference type="Pfam" id="PF00069">
    <property type="entry name" value="Pkinase"/>
    <property type="match status" value="1"/>
</dbReference>
<dbReference type="SMART" id="SM00220">
    <property type="entry name" value="S_TKc"/>
    <property type="match status" value="1"/>
</dbReference>
<dbReference type="SUPFAM" id="SSF50729">
    <property type="entry name" value="PH domain-like"/>
    <property type="match status" value="1"/>
</dbReference>
<dbReference type="SUPFAM" id="SSF56112">
    <property type="entry name" value="Protein kinase-like (PK-like)"/>
    <property type="match status" value="1"/>
</dbReference>
<dbReference type="PROSITE" id="PS00107">
    <property type="entry name" value="PROTEIN_KINASE_ATP"/>
    <property type="match status" value="1"/>
</dbReference>
<dbReference type="PROSITE" id="PS50011">
    <property type="entry name" value="PROTEIN_KINASE_DOM"/>
    <property type="match status" value="1"/>
</dbReference>
<dbReference type="PROSITE" id="PS00108">
    <property type="entry name" value="PROTEIN_KINASE_ST"/>
    <property type="match status" value="1"/>
</dbReference>
<protein>
    <recommendedName>
        <fullName>3-phosphoinositide-dependent protein kinase 1</fullName>
        <shortName>mPDK1</shortName>
        <ecNumber evidence="6 9 12">2.7.11.1</ecNumber>
    </recommendedName>
</protein>
<evidence type="ECO:0000250" key="1"/>
<evidence type="ECO:0000250" key="2">
    <source>
        <dbReference type="UniProtKB" id="O15530"/>
    </source>
</evidence>
<evidence type="ECO:0000255" key="3">
    <source>
        <dbReference type="PROSITE-ProRule" id="PRU00159"/>
    </source>
</evidence>
<evidence type="ECO:0000255" key="4">
    <source>
        <dbReference type="PROSITE-ProRule" id="PRU10027"/>
    </source>
</evidence>
<evidence type="ECO:0000256" key="5">
    <source>
        <dbReference type="SAM" id="MobiDB-lite"/>
    </source>
</evidence>
<evidence type="ECO:0000269" key="6">
    <source>
    </source>
</evidence>
<evidence type="ECO:0000269" key="7">
    <source>
    </source>
</evidence>
<evidence type="ECO:0000269" key="8">
    <source>
    </source>
</evidence>
<evidence type="ECO:0000269" key="9">
    <source>
    </source>
</evidence>
<evidence type="ECO:0000269" key="10">
    <source>
    </source>
</evidence>
<evidence type="ECO:0000269" key="11">
    <source>
    </source>
</evidence>
<evidence type="ECO:0000269" key="12">
    <source>
    </source>
</evidence>
<evidence type="ECO:0000269" key="13">
    <source>
    </source>
</evidence>
<evidence type="ECO:0000269" key="14">
    <source>
    </source>
</evidence>
<evidence type="ECO:0000269" key="15">
    <source>
    </source>
</evidence>
<evidence type="ECO:0000269" key="16">
    <source>
    </source>
</evidence>
<evidence type="ECO:0000305" key="17"/>
<evidence type="ECO:0007744" key="18">
    <source>
    </source>
</evidence>
<evidence type="ECO:0007744" key="19">
    <source>
    </source>
</evidence>
<evidence type="ECO:0007744" key="20">
    <source>
    </source>
</evidence>
<feature type="chain" id="PRO_0000086501" description="3-phosphoinositide-dependent protein kinase 1">
    <location>
        <begin position="1"/>
        <end position="559"/>
    </location>
</feature>
<feature type="domain" description="Protein kinase" evidence="3">
    <location>
        <begin position="85"/>
        <end position="345"/>
    </location>
</feature>
<feature type="domain" description="PH">
    <location>
        <begin position="462"/>
        <end position="553"/>
    </location>
</feature>
<feature type="region of interest" description="Disordered" evidence="5">
    <location>
        <begin position="25"/>
        <end position="83"/>
    </location>
</feature>
<feature type="region of interest" description="PIF-pocket" evidence="2">
    <location>
        <begin position="116"/>
        <end position="160"/>
    </location>
</feature>
<feature type="compositionally biased region" description="Low complexity" evidence="5">
    <location>
        <begin position="35"/>
        <end position="44"/>
    </location>
</feature>
<feature type="compositionally biased region" description="Polar residues" evidence="5">
    <location>
        <begin position="45"/>
        <end position="54"/>
    </location>
</feature>
<feature type="active site" description="Proton acceptor" evidence="3 4">
    <location>
        <position position="208"/>
    </location>
</feature>
<feature type="binding site" evidence="2">
    <location>
        <begin position="95"/>
        <end position="97"/>
    </location>
    <ligand>
        <name>ATP</name>
        <dbReference type="ChEBI" id="CHEBI:30616"/>
    </ligand>
</feature>
<feature type="binding site" evidence="2">
    <location>
        <position position="114"/>
    </location>
    <ligand>
        <name>ATP</name>
        <dbReference type="ChEBI" id="CHEBI:30616"/>
    </ligand>
</feature>
<feature type="binding site" evidence="2">
    <location>
        <begin position="163"/>
        <end position="165"/>
    </location>
    <ligand>
        <name>ATP</name>
        <dbReference type="ChEBI" id="CHEBI:30616"/>
    </ligand>
</feature>
<feature type="binding site" evidence="2">
    <location>
        <position position="169"/>
    </location>
    <ligand>
        <name>ATP</name>
        <dbReference type="ChEBI" id="CHEBI:30616"/>
    </ligand>
</feature>
<feature type="binding site" evidence="2">
    <location>
        <position position="212"/>
    </location>
    <ligand>
        <name>ATP</name>
        <dbReference type="ChEBI" id="CHEBI:30616"/>
    </ligand>
</feature>
<feature type="binding site" evidence="2">
    <location>
        <position position="226"/>
    </location>
    <ligand>
        <name>ATP</name>
        <dbReference type="ChEBI" id="CHEBI:30616"/>
    </ligand>
</feature>
<feature type="modified residue" description="Phosphotyrosine; by SRC and INSR" evidence="2">
    <location>
        <position position="9"/>
    </location>
</feature>
<feature type="modified residue" description="Phosphoserine" evidence="2">
    <location>
        <position position="25"/>
    </location>
</feature>
<feature type="modified residue" description="Phosphoserine" evidence="18 19">
    <location>
        <position position="244"/>
    </location>
</feature>
<feature type="modified residue" description="N6-acetyllysine" evidence="20">
    <location>
        <position position="307"/>
    </location>
</feature>
<feature type="modified residue" description="Phosphothreonine; by MELK" evidence="2">
    <location>
        <position position="357"/>
    </location>
</feature>
<feature type="modified residue" description="Phosphotyrosine; by SRC and INSR" evidence="2">
    <location>
        <position position="376"/>
    </location>
</feature>
<feature type="modified residue" description="Phosphotyrosine; by SRC and INSR" evidence="2">
    <location>
        <position position="379"/>
    </location>
</feature>
<feature type="modified residue" description="Phosphoserine" evidence="2">
    <location>
        <position position="396"/>
    </location>
</feature>
<feature type="modified residue" description="Phosphoserine; by MAP3K5" evidence="2">
    <location>
        <position position="397"/>
    </location>
</feature>
<feature type="modified residue" description="Phosphoserine" evidence="2">
    <location>
        <position position="399"/>
    </location>
</feature>
<feature type="modified residue" description="Phosphoserine; by MAP3K5" evidence="2">
    <location>
        <position position="401"/>
    </location>
</feature>
<feature type="modified residue" description="Phosphoserine" evidence="2">
    <location>
        <position position="413"/>
    </location>
</feature>
<feature type="modified residue" description="Phosphoserine; by PKC/PRKCQ" evidence="12">
    <location>
        <position position="504"/>
    </location>
</feature>
<feature type="modified residue" description="Phosphothreonine; by autocatalysis" evidence="2">
    <location>
        <position position="516"/>
    </location>
</feature>
<feature type="modified residue" description="Phosphoserine; by PKC/PRKCQ" evidence="12">
    <location>
        <position position="532"/>
    </location>
</feature>
<feature type="sequence conflict" description="In Ref. 1; AAC67544." evidence="17" ref="1">
    <original>D</original>
    <variation>N</variation>
    <location>
        <position position="84"/>
    </location>
</feature>
<feature type="sequence conflict" description="In Ref. 3; AAC96115." evidence="17" ref="3">
    <original>T</original>
    <variation>P</variation>
    <location>
        <position position="248"/>
    </location>
</feature>
<feature type="sequence conflict" description="In Ref. 3; AAC96115." evidence="17" ref="3">
    <original>F</original>
    <variation>S</variation>
    <location>
        <position position="285"/>
    </location>
</feature>
<feature type="sequence conflict" description="In Ref. 3; AAC96115." evidence="17" ref="3">
    <original>W</original>
    <variation>R</variation>
    <location>
        <position position="546"/>
    </location>
</feature>
<reference key="1">
    <citation type="journal article" date="1999" name="J. Biol. Chem.">
        <title>Primary structure, tissue distribution, and expression of mouse phosphoinositide-dependent protein kinase-1, a protein kinase that phosphorylates and activates protein kinase C zeta.</title>
        <authorList>
            <person name="Dong L.Q."/>
            <person name="Zhang R.-B."/>
            <person name="Langlais P."/>
            <person name="He H."/>
            <person name="Clark M."/>
            <person name="Zhu L."/>
            <person name="Liu F."/>
        </authorList>
    </citation>
    <scope>NUCLEOTIDE SEQUENCE [MRNA]</scope>
    <scope>FUNCTION</scope>
    <scope>CATALYTIC ACTIVITY</scope>
    <source>
        <tissue>Liver</tissue>
    </source>
</reference>
<reference key="2">
    <citation type="submission" date="1999-02" db="EMBL/GenBank/DDBJ databases">
        <title>Mouse phosphoinositide-dependent protein kinase 1 (mPDK1).</title>
        <authorList>
            <person name="Park J."/>
            <person name="Hemmings B.A."/>
        </authorList>
    </citation>
    <scope>NUCLEOTIDE SEQUENCE [MRNA]</scope>
    <source>
        <tissue>Brain</tissue>
    </source>
</reference>
<reference key="3">
    <citation type="submission" date="1998-07" db="EMBL/GenBank/DDBJ databases">
        <authorList>
            <person name="Xu P."/>
            <person name="Taylor S."/>
        </authorList>
    </citation>
    <scope>NUCLEOTIDE SEQUENCE [MRNA]</scope>
    <source>
        <strain>C57BL/6J</strain>
    </source>
</reference>
<reference key="4">
    <citation type="journal article" date="2004" name="Genome Res.">
        <title>The status, quality, and expansion of the NIH full-length cDNA project: the Mammalian Gene Collection (MGC).</title>
        <authorList>
            <consortium name="The MGC Project Team"/>
        </authorList>
    </citation>
    <scope>NUCLEOTIDE SEQUENCE [LARGE SCALE MRNA]</scope>
    <source>
        <tissue>Brain</tissue>
    </source>
</reference>
<reference key="5">
    <citation type="journal article" date="2000" name="Proc. Natl. Acad. Sci. U.S.A.">
        <title>Phosphorylation of protein kinase N by phosphoinositide-dependent protein kinase-1 mediates insulin signals to the actin cytoskeleton.</title>
        <authorList>
            <person name="Dong L.Q."/>
            <person name="Landa L.R."/>
            <person name="Wick M.J."/>
            <person name="Zhu L."/>
            <person name="Mukai H."/>
            <person name="Ono Y."/>
            <person name="Liu F."/>
        </authorList>
    </citation>
    <scope>FUNCTION IN PHOSPHORYLATION OF PKN1 AND PKN2</scope>
    <scope>INTERACTION WITH PKN1 AND PKN2</scope>
</reference>
<reference key="6">
    <citation type="journal article" date="2004" name="Mol. Cell. Proteomics">
        <title>Phosphoproteomic analysis of the developing mouse brain.</title>
        <authorList>
            <person name="Ballif B.A."/>
            <person name="Villen J."/>
            <person name="Beausoleil S.A."/>
            <person name="Schwartz D."/>
            <person name="Gygi S.P."/>
        </authorList>
    </citation>
    <scope>PHOSPHORYLATION [LARGE SCALE ANALYSIS] AT SER-244</scope>
    <scope>IDENTIFICATION BY MASS SPECTROMETRY [LARGE SCALE ANALYSIS]</scope>
    <source>
        <tissue>Embryonic brain</tissue>
    </source>
</reference>
<reference key="7">
    <citation type="journal article" date="2005" name="FEBS J.">
        <title>Characterization of testis-specific serine-threonine kinase 3 and its activation by phosphoinositide-dependent kinase-1-dependent signalling.</title>
        <authorList>
            <person name="Bucko-Justyna M."/>
            <person name="Lipinski L."/>
            <person name="Burgering B.M."/>
            <person name="Trzeciak L."/>
        </authorList>
    </citation>
    <scope>FUNCTION</scope>
    <scope>CATALYTIC ACTIVITY</scope>
</reference>
<reference key="8">
    <citation type="journal article" date="2006" name="Mol. Endocrinol.">
        <title>3-phosphoinositide-dependent protein kinase-1 activates the peroxisome proliferator-activated receptor-gamma and promotes adipocyte differentiation.</title>
        <authorList>
            <person name="Yin Y."/>
            <person name="Yuan H."/>
            <person name="Wang C."/>
            <person name="Pattabiraman N."/>
            <person name="Rao M."/>
            <person name="Pestell R.G."/>
            <person name="Glazer R.I."/>
        </authorList>
    </citation>
    <scope>FUNCTION</scope>
    <scope>INTERACTION WITH PPARG</scope>
</reference>
<reference key="9">
    <citation type="journal article" date="2007" name="EMBO J.">
        <title>Notch-induced T cell development requires phosphoinositide-dependent kinase 1.</title>
        <authorList>
            <person name="Kelly A.P."/>
            <person name="Finlay D.K."/>
            <person name="Hinton H.J."/>
            <person name="Clarke R.G."/>
            <person name="Fiorini E."/>
            <person name="Radtke F."/>
            <person name="Cantrell D.A."/>
        </authorList>
    </citation>
    <scope>FUNCTION</scope>
</reference>
<reference key="10">
    <citation type="journal article" date="2007" name="J. Cell Biol.">
        <title>Essential role of PDK1 in regulating endothelial cell migration.</title>
        <authorList>
            <person name="Primo L."/>
            <person name="di Blasio L."/>
            <person name="Roca C."/>
            <person name="Droetto S."/>
            <person name="Piva R."/>
            <person name="Schaffhausen B."/>
            <person name="Bussolino F."/>
        </authorList>
    </citation>
    <scope>FUNCTION</scope>
    <scope>SUBCELLULAR LOCATION</scope>
</reference>
<reference key="11">
    <citation type="journal article" date="2007" name="Proc. Natl. Acad. Sci. U.S.A.">
        <title>Large-scale phosphorylation analysis of mouse liver.</title>
        <authorList>
            <person name="Villen J."/>
            <person name="Beausoleil S.A."/>
            <person name="Gerber S.A."/>
            <person name="Gygi S.P."/>
        </authorList>
    </citation>
    <scope>IDENTIFICATION BY MASS SPECTROMETRY [LARGE SCALE ANALYSIS]</scope>
    <source>
        <tissue>Liver</tissue>
    </source>
</reference>
<reference key="12">
    <citation type="journal article" date="2009" name="Dev. Biol.">
        <title>Pdk1 activity controls proliferation, survival, and growth of developing pancreatic cells.</title>
        <authorList>
            <person name="Westmoreland J.J."/>
            <person name="Wang Q."/>
            <person name="Bouzaffour M."/>
            <person name="Baker S.J."/>
            <person name="Sosa-Pineda B."/>
        </authorList>
    </citation>
    <scope>FUNCTION</scope>
    <scope>DISRUPTION PHENOTYPE</scope>
</reference>
<reference key="13">
    <citation type="journal article" date="2009" name="J. Biol. Chem.">
        <title>Protein kinase C theta (PKCtheta)-dependent phosphorylation of PDK1 at Ser504 and Ser532 contributes to palmitate-induced insulin resistance.</title>
        <authorList>
            <person name="Wang C."/>
            <person name="Liu M."/>
            <person name="Riojas R.A."/>
            <person name="Xin X."/>
            <person name="Gao Z."/>
            <person name="Zeng R."/>
            <person name="Wu J."/>
            <person name="Dong L.Q."/>
            <person name="Liu F."/>
        </authorList>
    </citation>
    <scope>FUNCTION</scope>
    <scope>CATALYTIC ACTIVITY</scope>
    <scope>PHOSPHORYLATION AT SER-504 AND SER-532 BY PKC/PRKCQ</scope>
</reference>
<reference key="14">
    <citation type="journal article" date="2009" name="Proc. Natl. Acad. Sci. U.S.A.">
        <title>PDK1 coordinates survival pathways and beta-adrenergic response in the heart.</title>
        <authorList>
            <person name="Ito K."/>
            <person name="Akazawa H."/>
            <person name="Tamagawa M."/>
            <person name="Furukawa K."/>
            <person name="Ogawa W."/>
            <person name="Yasuda N."/>
            <person name="Kudo Y."/>
            <person name="Liao C.H."/>
            <person name="Yamamoto R."/>
            <person name="Sato T."/>
            <person name="Molkentin J.D."/>
            <person name="Kasuga M."/>
            <person name="Noda T."/>
            <person name="Nakaya H."/>
            <person name="Komuro I."/>
        </authorList>
    </citation>
    <scope>FUNCTION</scope>
    <scope>DISRUPTION PHENOTYPE</scope>
</reference>
<reference key="15">
    <citation type="journal article" date="2010" name="Cell">
        <title>A tissue-specific atlas of mouse protein phosphorylation and expression.</title>
        <authorList>
            <person name="Huttlin E.L."/>
            <person name="Jedrychowski M.P."/>
            <person name="Elias J.E."/>
            <person name="Goswami T."/>
            <person name="Rad R."/>
            <person name="Beausoleil S.A."/>
            <person name="Villen J."/>
            <person name="Haas W."/>
            <person name="Sowa M.E."/>
            <person name="Gygi S.P."/>
        </authorList>
    </citation>
    <scope>PHOSPHORYLATION [LARGE SCALE ANALYSIS] AT SER-244</scope>
    <scope>IDENTIFICATION BY MASS SPECTROMETRY [LARGE SCALE ANALYSIS]</scope>
    <source>
        <tissue>Brain</tissue>
        <tissue>Brown adipose tissue</tissue>
        <tissue>Heart</tissue>
        <tissue>Kidney</tissue>
        <tissue>Liver</tissue>
        <tissue>Lung</tissue>
        <tissue>Pancreas</tissue>
        <tissue>Spleen</tissue>
        <tissue>Testis</tissue>
    </source>
</reference>
<reference key="16">
    <citation type="journal article" date="2010" name="Cell. Physiol. Biochem.">
        <title>Phosphoinositide-dependent kinase PDK1 in the regulation of Ca2+ entry into mast cells.</title>
        <authorList>
            <person name="Shumilina E."/>
            <person name="Zemtsova I.M."/>
            <person name="Heise N."/>
            <person name="Schmid E."/>
            <person name="Eichenmueller M."/>
            <person name="Tyan L."/>
            <person name="Rexhepaj R."/>
            <person name="Lang F."/>
        </authorList>
    </citation>
    <scope>FUNCTION</scope>
</reference>
<reference key="17">
    <citation type="journal article" date="2010" name="Mol. Cell. Biol.">
        <title>Phosphoinositide-dependent kinase 1 provides negative feedback inhibition to Toll-like receptor-mediated NF-kappaB activation in macrophages.</title>
        <authorList>
            <person name="Chaurasia B."/>
            <person name="Mauer J."/>
            <person name="Koch L."/>
            <person name="Goldau J."/>
            <person name="Kock A.S."/>
            <person name="Bruening J.C."/>
        </authorList>
    </citation>
    <scope>FUNCTION</scope>
</reference>
<reference key="18">
    <citation type="journal article" date="2013" name="Mol. Cell">
        <title>SIRT5-mediated lysine desuccinylation impacts diverse metabolic pathways.</title>
        <authorList>
            <person name="Park J."/>
            <person name="Chen Y."/>
            <person name="Tishkoff D.X."/>
            <person name="Peng C."/>
            <person name="Tan M."/>
            <person name="Dai L."/>
            <person name="Xie Z."/>
            <person name="Zhang Y."/>
            <person name="Zwaans B.M."/>
            <person name="Skinner M.E."/>
            <person name="Lombard D.B."/>
            <person name="Zhao Y."/>
        </authorList>
    </citation>
    <scope>ACETYLATION [LARGE SCALE ANALYSIS] AT LYS-307</scope>
    <scope>IDENTIFICATION BY MASS SPECTROMETRY [LARGE SCALE ANALYSIS]</scope>
    <source>
        <tissue>Embryonic fibroblast</tissue>
    </source>
</reference>
<accession>Q9Z2A0</accession>
<accession>A6H6U3</accession>
<accession>Q9R1D8</accession>
<accession>Q9R215</accession>
<organism>
    <name type="scientific">Mus musculus</name>
    <name type="common">Mouse</name>
    <dbReference type="NCBI Taxonomy" id="10090"/>
    <lineage>
        <taxon>Eukaryota</taxon>
        <taxon>Metazoa</taxon>
        <taxon>Chordata</taxon>
        <taxon>Craniata</taxon>
        <taxon>Vertebrata</taxon>
        <taxon>Euteleostomi</taxon>
        <taxon>Mammalia</taxon>
        <taxon>Eutheria</taxon>
        <taxon>Euarchontoglires</taxon>
        <taxon>Glires</taxon>
        <taxon>Rodentia</taxon>
        <taxon>Myomorpha</taxon>
        <taxon>Muroidea</taxon>
        <taxon>Muridae</taxon>
        <taxon>Murinae</taxon>
        <taxon>Mus</taxon>
        <taxon>Mus</taxon>
    </lineage>
</organism>
<keyword id="KW-0007">Acetylation</keyword>
<keyword id="KW-0067">ATP-binding</keyword>
<keyword id="KW-0965">Cell junction</keyword>
<keyword id="KW-1003">Cell membrane</keyword>
<keyword id="KW-0963">Cytoplasm</keyword>
<keyword id="KW-0418">Kinase</keyword>
<keyword id="KW-0472">Membrane</keyword>
<keyword id="KW-0547">Nucleotide-binding</keyword>
<keyword id="KW-0539">Nucleus</keyword>
<keyword id="KW-0597">Phosphoprotein</keyword>
<keyword id="KW-1185">Reference proteome</keyword>
<keyword id="KW-0723">Serine/threonine-protein kinase</keyword>
<keyword id="KW-0804">Transcription</keyword>
<keyword id="KW-0805">Transcription regulation</keyword>
<keyword id="KW-0808">Transferase</keyword>
<keyword id="KW-0832">Ubl conjugation</keyword>
<comment type="function">
    <text evidence="2 6 7 8 9 10 11 12 13 14 15 16">Serine/threonine kinase which acts as a master kinase, phosphorylating and activating a subgroup of the AGC family of protein kinases (PubMed:10075713, PubMed:16150867, PubMed:16336268, PubMed:19047061, PubMed:19635472, PubMed:21063107). Its targets include: protein kinase B (PKB/AKT1, PKB/AKT2, PKB/AKT3), p70 ribosomal protein S6 kinase (RPS6KB1), p90 ribosomal protein S6 kinase (RPS6KA1, RPS6KA2 and RPS6KA3), cyclic AMP-dependent protein kinase (PRKACA), protein kinase C (PRKCD and PRKCZ), serum and glucocorticoid-inducible kinase (SGK1, SGK2 and SGK3), p21-activated kinase-1 (PAK1), TSSK3, protein kinase PKN (PKN1 and PKN2) (PubMed:10075713, PubMed:10792047, PubMed:16336268, PubMed:19047061). Plays a central role in the transduction of signals from insulin by providing the activating phosphorylation to PKB/AKT1, thus propagating the signal to downstream targets controlling cell proliferation and survival, as well as glucose and amino acid uptake and storage (By similarity). Negatively regulates the TGF-beta-induced signaling by: modulating the association of SMAD3 and SMAD7 with TGF-beta receptor, phosphorylating SMAD2, SMAD3, SMAD4 and SMAD7, preventing the nuclear translocation of SMAD3 and SMAD4 and the translocation of SMAD7 from the nucleus to the cytoplasm in response to TGF-beta (By similarity). Activates PPARG transcriptional activity and promotes adipocyte differentiation (PubMed:16150867). Activates the NF-kappa-B pathway via phosphorylation of IKKB (By similarity). The tyrosine phosphorylated form is crucial for the regulation of focal adhesions by angiotensin II (By similarity). Controls proliferation, survival, and growth of developing pancreatic cells (PubMed:19635472). Participates in the regulation of Ca(2+) entry and Ca(2+)-activated K(+) channels of mast cells (PubMed:21063107). Essential for the motility of vascular endothelial cells (ECs) and is involved in the regulation of their chemotaxis (PubMed:17371830). Plays a critical role in cardiac homeostasis by serving as a dual effector for cell survival and beta-adrenergic response (PubMed:19429709). Plays an important role during thymocyte development by regulating the expression of key nutrient receptors on the surface of pre-T cells and mediating Notch-induced cell growth and proliferative responses (PubMed:17599070). Provides negative feedback inhibition to toll-like receptor-mediated NF-kappa-B activation in macrophages (PubMed:20584979).</text>
</comment>
<comment type="catalytic activity">
    <reaction evidence="6 12">
        <text>L-seryl-[protein] + ATP = O-phospho-L-seryl-[protein] + ADP + H(+)</text>
        <dbReference type="Rhea" id="RHEA:17989"/>
        <dbReference type="Rhea" id="RHEA-COMP:9863"/>
        <dbReference type="Rhea" id="RHEA-COMP:11604"/>
        <dbReference type="ChEBI" id="CHEBI:15378"/>
        <dbReference type="ChEBI" id="CHEBI:29999"/>
        <dbReference type="ChEBI" id="CHEBI:30616"/>
        <dbReference type="ChEBI" id="CHEBI:83421"/>
        <dbReference type="ChEBI" id="CHEBI:456216"/>
        <dbReference type="EC" id="2.7.11.1"/>
    </reaction>
</comment>
<comment type="catalytic activity">
    <reaction evidence="6 9 12">
        <text>L-threonyl-[protein] + ATP = O-phospho-L-threonyl-[protein] + ADP + H(+)</text>
        <dbReference type="Rhea" id="RHEA:46608"/>
        <dbReference type="Rhea" id="RHEA-COMP:11060"/>
        <dbReference type="Rhea" id="RHEA-COMP:11605"/>
        <dbReference type="ChEBI" id="CHEBI:15378"/>
        <dbReference type="ChEBI" id="CHEBI:30013"/>
        <dbReference type="ChEBI" id="CHEBI:30616"/>
        <dbReference type="ChEBI" id="CHEBI:61977"/>
        <dbReference type="ChEBI" id="CHEBI:456216"/>
        <dbReference type="EC" id="2.7.11.1"/>
    </reaction>
</comment>
<comment type="activity regulation">
    <text evidence="1">Homodimerization regulates its activity by maintaining the kinase in an autoinhibitory conformation. NPRL2 down-regulates its activity by interfering with tyrosine phosphorylation at the Tyr-9, Tyr-376 and Tyr-379 residues. The 14-3-3 protein YWHAQ acts as a negative regulator by association with the residues surrounding the Ser-244 residue. STRAP positively regulates its activity by enhancing its autophosphorylation and by stimulating its dissociation from YWHAQ. SMAD2, SMAD3, SMAD4 and SMAD7 also positively regulate its activity by stimulating its dissociation from YWHAQ. Activated by phosphorylation on Tyr-9, Tyr-376 and Tyr-379 by INSR in response to insulin (By similarity).</text>
</comment>
<comment type="subunit">
    <text evidence="1 7 8">Homodimer in its autoinhibited state. Active as monomer. Interacts with NPRL2, PAK1, PTK2B, GRB14, STRAP and IKKB. The Tyr-9 phosphorylated form interacts with SRC, RASA1 and CRK (via their SH2 domains). Interacts with SGK3 in a phosphorylation-dependent manner. The tyrosine-phosphorylated form interacts with PTPN6. The Ser-244 phosphorylated form interacts with YWHAH and YWHAQ. Binds INSR in response to insulin. Interacts (via PH domain) with SMAD3, SMAD4 and SMAD7. Interacts with PKN2; the interaction stimulates PDPK1 autophosphorylation, its PI(3,4,5)P3-dependent kinase activity toward 'Ser-473' of AKT1 but also activates its kinase activity toward PRKCD and PRKCZ (By similarity). Interacts with PKN1 (via C-terminus) and PPARG.</text>
</comment>
<comment type="subcellular location">
    <subcellularLocation>
        <location evidence="10">Cytoplasm</location>
    </subcellularLocation>
    <subcellularLocation>
        <location evidence="1">Nucleus</location>
    </subcellularLocation>
    <subcellularLocation>
        <location evidence="10">Cell membrane</location>
        <topology evidence="10">Peripheral membrane protein</topology>
    </subcellularLocation>
    <subcellularLocation>
        <location evidence="1">Cell junction</location>
        <location evidence="1">Focal adhesion</location>
    </subcellularLocation>
    <text evidence="1">Tyrosine phosphorylation seems to occur only at the cell membrane. Translocates to the cell membrane following insulin stimulation by a mechanism that involves binding to GRB14 and INSR. SRC and HSP90 promote its localization to the cell membrane. Its nuclear localization is dependent on its association with PTPN6 and its phosphorylation at Ser-396. Restricted to the nucleus in neuronal cells while in non-neuronal cells it is found in the cytoplasm. The Ser-244 phosphorylated form is distributed along the perinuclear region in neuronal cells while in non-neuronal cells it is found in both the nucleus and the cytoplasm. IGF1 transiently increases phosphorylation at Ser-241 of neuronal PDPK1, resulting in its translocation to other cellular compartments. The tyrosine-phosphorylated form colocalizes with PTK2B in focal adhesions after angiotensin II stimulation (By similarity).</text>
</comment>
<comment type="tissue specificity">
    <text>Highly expressed in heart, brain, liver and testis, also expressed in embryonic cells.</text>
</comment>
<comment type="domain">
    <text evidence="1">The PH domain plays a pivotal role in the localization and nuclear import of PDPK1 and is also essential for its homodimerization.</text>
</comment>
<comment type="domain">
    <text evidence="2">The PIF-pocket is a small lobe in the catalytic domain required by the enzyme for the binding to the hydrophobic motif of its substrates. It is an allosteric regulatory site that can accommodate small compounds acting as allosteric inhibitors.</text>
</comment>
<comment type="PTM">
    <text evidence="1">Phosphorylation on Ser-244 in the activation loop is required for full activity. PDPK1 itself can autophosphorylate Ser-244, leading to its own activation. Autophosphorylation is inhibited by the apoptotic C-terminus cleavage product of PKN2 (By similarity). Tyr-9 phosphorylation is critical for stabilization of both PDPK1 and the PDPK1/SRC complex via HSP90-mediated protection of PDPK1 degradation. Angiotensin II stimulates the tyrosine phosphorylation of PDPK1 in vascular smooth muscle in a calcium- and SRC-dependent manner. Phosphorylated on Tyr-9, Tyr-376 and Tyr-379 by INSR in response to insulin. Palmitate negatively regulates autophosphorylation at Ser-244 and palmitate-induced phosphorylation at Ser-532 and Ser-504 by PKC/PRKCQ negatively regulates its ability to phosphorylate PKB/AKT1. Phosphorylation at Thr-357 by MELK partially inhibits kinase activity, the inhibition is cooperatively enhanced by phosphorylation at Ser-397 and Ser-401 by MAP3K5 (By similarity).</text>
</comment>
<comment type="PTM">
    <text evidence="1">Monoubiquitinated in the kinase domain, deubiquitinated by USP4.</text>
</comment>
<comment type="disruption phenotype">
    <text evidence="13 14">Mice show severe pancreatic hypoplasia at birth and ensuing hyperglycemia at postnatal stages and die of heart failure by 11 weeks of age.</text>
</comment>
<comment type="similarity">
    <text evidence="17">Belongs to the protein kinase superfamily. AGC Ser/Thr protein kinase family. PDPK1 subfamily.</text>
</comment>
<proteinExistence type="evidence at protein level"/>
<sequence length="559" mass="63759">MARTTSQLYDAVPIQSSVVLCSCPSPSMVRSQTEPGSSPGIPSGVSRQGSTMDGTTAEARPSTNPLQQHPAQLPPQPRKKRPEDFKFGKILGEGSFSTVVLARELATSREYAIKILEKRHIIKENKVPYVTRERDVMSRLDHPFFVKLYFTFQDDEKLYFGLSYAKNGELLKYIRKIGSFDETCTRFYTAEIVSALEYLHGKGIIHRDLKPENILLNEDMHIQITDFGTAKVLSPESKQARANSFVGTAQYVSPELLTEKSACKSSDLWALGCIIYQLVAGLPPFRAGNEYLIFQKIIKLEYHFPEKFFPKARDLVEKLLVLDATKRLGCEEMEGYGPLKAHPFFETITWENLHQQTPPKLTAYLPAMSEDDEDCYGNYDNLLSQFGFMQVSSSSSSHSLSTVETSLPQRSGSNIEQYIHDLDTNSFELDLQFSEDEKRLLLEKQAGGNPWHQFVENNLILKMGPVDKRKGLFARRRQLLLTEGPHLYYVDPVNKVLKGEIPWSQELRPEAKNFKTFFVHTPNRTYYLMDPSGNAHKWCRKIQEVWRQQYQSNPDAAVQ</sequence>
<name>PDPK1_MOUSE</name>